<evidence type="ECO:0000255" key="1">
    <source>
        <dbReference type="HAMAP-Rule" id="MF_00004"/>
    </source>
</evidence>
<organism>
    <name type="scientific">Paraburkholderia phymatum (strain DSM 17167 / CIP 108236 / LMG 21445 / STM815)</name>
    <name type="common">Burkholderia phymatum</name>
    <dbReference type="NCBI Taxonomy" id="391038"/>
    <lineage>
        <taxon>Bacteria</taxon>
        <taxon>Pseudomonadati</taxon>
        <taxon>Pseudomonadota</taxon>
        <taxon>Betaproteobacteria</taxon>
        <taxon>Burkholderiales</taxon>
        <taxon>Burkholderiaceae</taxon>
        <taxon>Paraburkholderia</taxon>
    </lineage>
</organism>
<dbReference type="EC" id="2.4.2.7" evidence="1"/>
<dbReference type="EMBL" id="CP001043">
    <property type="protein sequence ID" value="ACC69526.1"/>
    <property type="molecule type" value="Genomic_DNA"/>
</dbReference>
<dbReference type="RefSeq" id="WP_012399752.1">
    <property type="nucleotide sequence ID" value="NC_010622.1"/>
</dbReference>
<dbReference type="SMR" id="B2JCQ7"/>
<dbReference type="STRING" id="391038.Bphy_0333"/>
<dbReference type="KEGG" id="bph:Bphy_0333"/>
<dbReference type="eggNOG" id="COG0503">
    <property type="taxonomic scope" value="Bacteria"/>
</dbReference>
<dbReference type="HOGENOM" id="CLU_063339_3_0_4"/>
<dbReference type="OrthoDB" id="9803963at2"/>
<dbReference type="UniPathway" id="UPA00588">
    <property type="reaction ID" value="UER00646"/>
</dbReference>
<dbReference type="Proteomes" id="UP000001192">
    <property type="component" value="Chromosome 1"/>
</dbReference>
<dbReference type="GO" id="GO:0005737">
    <property type="term" value="C:cytoplasm"/>
    <property type="evidence" value="ECO:0007669"/>
    <property type="project" value="UniProtKB-SubCell"/>
</dbReference>
<dbReference type="GO" id="GO:0002055">
    <property type="term" value="F:adenine binding"/>
    <property type="evidence" value="ECO:0007669"/>
    <property type="project" value="TreeGrafter"/>
</dbReference>
<dbReference type="GO" id="GO:0003999">
    <property type="term" value="F:adenine phosphoribosyltransferase activity"/>
    <property type="evidence" value="ECO:0007669"/>
    <property type="project" value="UniProtKB-UniRule"/>
</dbReference>
<dbReference type="GO" id="GO:0016208">
    <property type="term" value="F:AMP binding"/>
    <property type="evidence" value="ECO:0007669"/>
    <property type="project" value="TreeGrafter"/>
</dbReference>
<dbReference type="GO" id="GO:0006168">
    <property type="term" value="P:adenine salvage"/>
    <property type="evidence" value="ECO:0007669"/>
    <property type="project" value="InterPro"/>
</dbReference>
<dbReference type="GO" id="GO:0044209">
    <property type="term" value="P:AMP salvage"/>
    <property type="evidence" value="ECO:0007669"/>
    <property type="project" value="UniProtKB-UniRule"/>
</dbReference>
<dbReference type="GO" id="GO:0006166">
    <property type="term" value="P:purine ribonucleoside salvage"/>
    <property type="evidence" value="ECO:0007669"/>
    <property type="project" value="UniProtKB-KW"/>
</dbReference>
<dbReference type="CDD" id="cd06223">
    <property type="entry name" value="PRTases_typeI"/>
    <property type="match status" value="1"/>
</dbReference>
<dbReference type="FunFam" id="3.40.50.2020:FF:000021">
    <property type="entry name" value="Adenine phosphoribosyltransferase"/>
    <property type="match status" value="1"/>
</dbReference>
<dbReference type="Gene3D" id="3.40.50.2020">
    <property type="match status" value="1"/>
</dbReference>
<dbReference type="HAMAP" id="MF_00004">
    <property type="entry name" value="Aden_phosphoribosyltr"/>
    <property type="match status" value="1"/>
</dbReference>
<dbReference type="InterPro" id="IPR005764">
    <property type="entry name" value="Ade_phspho_trans"/>
</dbReference>
<dbReference type="InterPro" id="IPR000836">
    <property type="entry name" value="PRibTrfase_dom"/>
</dbReference>
<dbReference type="InterPro" id="IPR029057">
    <property type="entry name" value="PRTase-like"/>
</dbReference>
<dbReference type="InterPro" id="IPR050054">
    <property type="entry name" value="UPRTase/APRTase"/>
</dbReference>
<dbReference type="NCBIfam" id="TIGR01090">
    <property type="entry name" value="apt"/>
    <property type="match status" value="1"/>
</dbReference>
<dbReference type="NCBIfam" id="NF002634">
    <property type="entry name" value="PRK02304.1-3"/>
    <property type="match status" value="1"/>
</dbReference>
<dbReference type="NCBIfam" id="NF002636">
    <property type="entry name" value="PRK02304.1-5"/>
    <property type="match status" value="1"/>
</dbReference>
<dbReference type="PANTHER" id="PTHR32315">
    <property type="entry name" value="ADENINE PHOSPHORIBOSYLTRANSFERASE"/>
    <property type="match status" value="1"/>
</dbReference>
<dbReference type="PANTHER" id="PTHR32315:SF3">
    <property type="entry name" value="ADENINE PHOSPHORIBOSYLTRANSFERASE"/>
    <property type="match status" value="1"/>
</dbReference>
<dbReference type="Pfam" id="PF00156">
    <property type="entry name" value="Pribosyltran"/>
    <property type="match status" value="1"/>
</dbReference>
<dbReference type="SUPFAM" id="SSF53271">
    <property type="entry name" value="PRTase-like"/>
    <property type="match status" value="1"/>
</dbReference>
<dbReference type="PROSITE" id="PS00103">
    <property type="entry name" value="PUR_PYR_PR_TRANSFER"/>
    <property type="match status" value="1"/>
</dbReference>
<protein>
    <recommendedName>
        <fullName evidence="1">Adenine phosphoribosyltransferase</fullName>
        <shortName evidence="1">APRT</shortName>
        <ecNumber evidence="1">2.4.2.7</ecNumber>
    </recommendedName>
</protein>
<comment type="function">
    <text evidence="1">Catalyzes a salvage reaction resulting in the formation of AMP, that is energically less costly than de novo synthesis.</text>
</comment>
<comment type="catalytic activity">
    <reaction evidence="1">
        <text>AMP + diphosphate = 5-phospho-alpha-D-ribose 1-diphosphate + adenine</text>
        <dbReference type="Rhea" id="RHEA:16609"/>
        <dbReference type="ChEBI" id="CHEBI:16708"/>
        <dbReference type="ChEBI" id="CHEBI:33019"/>
        <dbReference type="ChEBI" id="CHEBI:58017"/>
        <dbReference type="ChEBI" id="CHEBI:456215"/>
        <dbReference type="EC" id="2.4.2.7"/>
    </reaction>
</comment>
<comment type="pathway">
    <text evidence="1">Purine metabolism; AMP biosynthesis via salvage pathway; AMP from adenine: step 1/1.</text>
</comment>
<comment type="subunit">
    <text evidence="1">Homodimer.</text>
</comment>
<comment type="subcellular location">
    <subcellularLocation>
        <location evidence="1">Cytoplasm</location>
    </subcellularLocation>
</comment>
<comment type="similarity">
    <text evidence="1">Belongs to the purine/pyrimidine phosphoribosyltransferase family.</text>
</comment>
<reference key="1">
    <citation type="journal article" date="2014" name="Stand. Genomic Sci.">
        <title>Complete genome sequence of Burkholderia phymatum STM815(T), a broad host range and efficient nitrogen-fixing symbiont of Mimosa species.</title>
        <authorList>
            <person name="Moulin L."/>
            <person name="Klonowska A."/>
            <person name="Caroline B."/>
            <person name="Booth K."/>
            <person name="Vriezen J.A."/>
            <person name="Melkonian R."/>
            <person name="James E.K."/>
            <person name="Young J.P."/>
            <person name="Bena G."/>
            <person name="Hauser L."/>
            <person name="Land M."/>
            <person name="Kyrpides N."/>
            <person name="Bruce D."/>
            <person name="Chain P."/>
            <person name="Copeland A."/>
            <person name="Pitluck S."/>
            <person name="Woyke T."/>
            <person name="Lizotte-Waniewski M."/>
            <person name="Bristow J."/>
            <person name="Riley M."/>
        </authorList>
    </citation>
    <scope>NUCLEOTIDE SEQUENCE [LARGE SCALE GENOMIC DNA]</scope>
    <source>
        <strain>DSM 17167 / CIP 108236 / LMG 21445 / STM815</strain>
    </source>
</reference>
<sequence>MSHAPANRPFDPAEYINSEIRTVPDWPQAGVQFRDITPLLQKPKSLRVLIDLFVQRYIDQKLDYVAGLDARGFIIGPILAYELNLGFIPIRKIGKLPFRTVSESYELEYGSATVEIHEDACKPGDRVVIVDDLIATGGTMMAGKKLLERLGATVIEGAAIVDLPDLGGSKLLRGAGLPLFTVTSFGGH</sequence>
<proteinExistence type="inferred from homology"/>
<gene>
    <name evidence="1" type="primary">apt</name>
    <name type="ordered locus">Bphy_0333</name>
</gene>
<accession>B2JCQ7</accession>
<name>APT_PARP8</name>
<keyword id="KW-0963">Cytoplasm</keyword>
<keyword id="KW-0328">Glycosyltransferase</keyword>
<keyword id="KW-0660">Purine salvage</keyword>
<keyword id="KW-1185">Reference proteome</keyword>
<keyword id="KW-0808">Transferase</keyword>
<feature type="chain" id="PRO_1000088959" description="Adenine phosphoribosyltransferase">
    <location>
        <begin position="1"/>
        <end position="188"/>
    </location>
</feature>